<keyword id="KW-0025">Alternative splicing</keyword>
<keyword id="KW-0378">Hydrolase</keyword>
<keyword id="KW-0539">Nucleus</keyword>
<keyword id="KW-0597">Phosphoprotein</keyword>
<keyword id="KW-0645">Protease</keyword>
<keyword id="KW-1185">Reference proteome</keyword>
<keyword id="KW-0788">Thiol protease</keyword>
<keyword id="KW-0833">Ubl conjugation pathway</keyword>
<accession>Q24574</accession>
<accession>A4V1I7</accession>
<accession>Q95TM9</accession>
<accession>Q9VRP1</accession>
<dbReference type="EC" id="3.4.19.12" evidence="6 7 9"/>
<dbReference type="EMBL" id="AE014296">
    <property type="protein sequence ID" value="AAF50752.2"/>
    <property type="molecule type" value="Genomic_DNA"/>
</dbReference>
<dbReference type="EMBL" id="AE014296">
    <property type="protein sequence ID" value="AAN12105.1"/>
    <property type="molecule type" value="Genomic_DNA"/>
</dbReference>
<dbReference type="EMBL" id="AE014296">
    <property type="protein sequence ID" value="AAS65076.2"/>
    <property type="molecule type" value="Genomic_DNA"/>
</dbReference>
<dbReference type="EMBL" id="BT003784">
    <property type="protein sequence ID" value="AAO41467.1"/>
    <property type="molecule type" value="mRNA"/>
</dbReference>
<dbReference type="EMBL" id="X99211">
    <property type="protein sequence ID" value="CAA67601.1"/>
    <property type="status" value="ALT_SEQ"/>
    <property type="molecule type" value="mRNA"/>
</dbReference>
<dbReference type="EMBL" id="AY058672">
    <property type="protein sequence ID" value="AAL13901.1"/>
    <property type="status" value="ALT_INIT"/>
    <property type="molecule type" value="mRNA"/>
</dbReference>
<dbReference type="RefSeq" id="NP_523937.2">
    <molecule id="Q24574-1"/>
    <property type="nucleotide sequence ID" value="NM_079213.4"/>
</dbReference>
<dbReference type="RefSeq" id="NP_729087.1">
    <molecule id="Q24574-1"/>
    <property type="nucleotide sequence ID" value="NM_168129.4"/>
</dbReference>
<dbReference type="RefSeq" id="NP_996001.2">
    <molecule id="Q24574-2"/>
    <property type="nucleotide sequence ID" value="NM_206279.4"/>
</dbReference>
<dbReference type="SMR" id="Q24574"/>
<dbReference type="BioGRID" id="64105">
    <property type="interactions" value="12"/>
</dbReference>
<dbReference type="FunCoup" id="Q24574">
    <property type="interactions" value="2625"/>
</dbReference>
<dbReference type="IntAct" id="Q24574">
    <property type="interactions" value="4"/>
</dbReference>
<dbReference type="STRING" id="7227.FBpp0076802"/>
<dbReference type="MEROPS" id="C19.105"/>
<dbReference type="GlyGen" id="Q24574">
    <property type="glycosylation" value="1 site"/>
</dbReference>
<dbReference type="iPTMnet" id="Q24574"/>
<dbReference type="PaxDb" id="7227-FBpp0076802"/>
<dbReference type="EnsemblMetazoa" id="FBtr0077095">
    <molecule id="Q24574-1"/>
    <property type="protein sequence ID" value="FBpp0076802"/>
    <property type="gene ID" value="FBgn0016756"/>
</dbReference>
<dbReference type="EnsemblMetazoa" id="FBtr0077096">
    <molecule id="Q24574-1"/>
    <property type="protein sequence ID" value="FBpp0076803"/>
    <property type="gene ID" value="FBgn0016756"/>
</dbReference>
<dbReference type="EnsemblMetazoa" id="FBtr0306259">
    <molecule id="Q24574-2"/>
    <property type="protein sequence ID" value="FBpp0297369"/>
    <property type="gene ID" value="FBgn0016756"/>
</dbReference>
<dbReference type="GeneID" id="38644"/>
<dbReference type="KEGG" id="dme:Dmel_CG5486"/>
<dbReference type="AGR" id="FB:FBgn0016756"/>
<dbReference type="CTD" id="55031"/>
<dbReference type="FlyBase" id="FBgn0016756">
    <property type="gene designation" value="Usp47"/>
</dbReference>
<dbReference type="VEuPathDB" id="VectorBase:FBgn0016756"/>
<dbReference type="eggNOG" id="KOG4598">
    <property type="taxonomic scope" value="Eukaryota"/>
</dbReference>
<dbReference type="GeneTree" id="ENSGT00940000157223"/>
<dbReference type="HOGENOM" id="CLU_002928_0_0_1"/>
<dbReference type="InParanoid" id="Q24574"/>
<dbReference type="OMA" id="DCDWRRY"/>
<dbReference type="OrthoDB" id="289038at2759"/>
<dbReference type="PhylomeDB" id="Q24574"/>
<dbReference type="BioGRID-ORCS" id="38644">
    <property type="hits" value="0 hits in 1 CRISPR screen"/>
</dbReference>
<dbReference type="ChiTaRS" id="Usp47">
    <property type="organism name" value="fly"/>
</dbReference>
<dbReference type="GenomeRNAi" id="38644"/>
<dbReference type="PRO" id="PR:Q24574"/>
<dbReference type="Proteomes" id="UP000000803">
    <property type="component" value="Chromosome 3L"/>
</dbReference>
<dbReference type="Bgee" id="FBgn0016756">
    <property type="expression patterns" value="Expressed in muscle cell in digestive tract and 231 other cell types or tissues"/>
</dbReference>
<dbReference type="GO" id="GO:0005829">
    <property type="term" value="C:cytosol"/>
    <property type="evidence" value="ECO:0000314"/>
    <property type="project" value="FlyBase"/>
</dbReference>
<dbReference type="GO" id="GO:0005634">
    <property type="term" value="C:nucleus"/>
    <property type="evidence" value="ECO:0000314"/>
    <property type="project" value="FlyBase"/>
</dbReference>
<dbReference type="GO" id="GO:0004843">
    <property type="term" value="F:cysteine-type deubiquitinase activity"/>
    <property type="evidence" value="ECO:0000314"/>
    <property type="project" value="FlyBase"/>
</dbReference>
<dbReference type="GO" id="GO:0042675">
    <property type="term" value="P:compound eye cone cell differentiation"/>
    <property type="evidence" value="ECO:0000315"/>
    <property type="project" value="FlyBase"/>
</dbReference>
<dbReference type="GO" id="GO:0032435">
    <property type="term" value="P:negative regulation of proteasomal ubiquitin-dependent protein catabolic process"/>
    <property type="evidence" value="ECO:0000314"/>
    <property type="project" value="FlyBase"/>
</dbReference>
<dbReference type="GO" id="GO:0090263">
    <property type="term" value="P:positive regulation of canonical Wnt signaling pathway"/>
    <property type="evidence" value="ECO:0000315"/>
    <property type="project" value="FlyBase"/>
</dbReference>
<dbReference type="GO" id="GO:0045742">
    <property type="term" value="P:positive regulation of epidermal growth factor receptor signaling pathway"/>
    <property type="evidence" value="ECO:0000315"/>
    <property type="project" value="FlyBase"/>
</dbReference>
<dbReference type="GO" id="GO:0070374">
    <property type="term" value="P:positive regulation of ERK1 and ERK2 cascade"/>
    <property type="evidence" value="ECO:0000316"/>
    <property type="project" value="FlyBase"/>
</dbReference>
<dbReference type="GO" id="GO:0046628">
    <property type="term" value="P:positive regulation of insulin receptor signaling pathway"/>
    <property type="evidence" value="ECO:0000315"/>
    <property type="project" value="FlyBase"/>
</dbReference>
<dbReference type="GO" id="GO:0045874">
    <property type="term" value="P:positive regulation of sevenless signaling pathway"/>
    <property type="evidence" value="ECO:0000316"/>
    <property type="project" value="FlyBase"/>
</dbReference>
<dbReference type="GO" id="GO:0016579">
    <property type="term" value="P:protein deubiquitination"/>
    <property type="evidence" value="ECO:0007669"/>
    <property type="project" value="InterPro"/>
</dbReference>
<dbReference type="GO" id="GO:0050821">
    <property type="term" value="P:protein stabilization"/>
    <property type="evidence" value="ECO:0000316"/>
    <property type="project" value="FlyBase"/>
</dbReference>
<dbReference type="GO" id="GO:0006508">
    <property type="term" value="P:proteolysis"/>
    <property type="evidence" value="ECO:0007669"/>
    <property type="project" value="UniProtKB-KW"/>
</dbReference>
<dbReference type="GO" id="GO:0031647">
    <property type="term" value="P:regulation of protein stability"/>
    <property type="evidence" value="ECO:0000318"/>
    <property type="project" value="GO_Central"/>
</dbReference>
<dbReference type="CDD" id="cd02659">
    <property type="entry name" value="peptidase_C19C"/>
    <property type="match status" value="1"/>
</dbReference>
<dbReference type="Gene3D" id="3.90.70.10">
    <property type="entry name" value="Cysteine proteinases"/>
    <property type="match status" value="1"/>
</dbReference>
<dbReference type="InterPro" id="IPR038765">
    <property type="entry name" value="Papain-like_cys_pep_sf"/>
</dbReference>
<dbReference type="InterPro" id="IPR050164">
    <property type="entry name" value="Peptidase_C19"/>
</dbReference>
<dbReference type="InterPro" id="IPR001394">
    <property type="entry name" value="Peptidase_C19_UCH"/>
</dbReference>
<dbReference type="InterPro" id="IPR045578">
    <property type="entry name" value="USP47_C"/>
</dbReference>
<dbReference type="InterPro" id="IPR018200">
    <property type="entry name" value="USP_CS"/>
</dbReference>
<dbReference type="InterPro" id="IPR028889">
    <property type="entry name" value="USP_dom"/>
</dbReference>
<dbReference type="PANTHER" id="PTHR24006">
    <property type="entry name" value="UBIQUITIN CARBOXYL-TERMINAL HYDROLASE"/>
    <property type="match status" value="1"/>
</dbReference>
<dbReference type="PANTHER" id="PTHR24006:SF702">
    <property type="entry name" value="UBIQUITIN CARBOXYL-TERMINAL HYDROLASE 47"/>
    <property type="match status" value="1"/>
</dbReference>
<dbReference type="Pfam" id="PF00443">
    <property type="entry name" value="UCH"/>
    <property type="match status" value="1"/>
</dbReference>
<dbReference type="Pfam" id="PF19718">
    <property type="entry name" value="USP47_C"/>
    <property type="match status" value="1"/>
</dbReference>
<dbReference type="SUPFAM" id="SSF54001">
    <property type="entry name" value="Cysteine proteinases"/>
    <property type="match status" value="1"/>
</dbReference>
<dbReference type="PROSITE" id="PS00972">
    <property type="entry name" value="USP_1"/>
    <property type="match status" value="1"/>
</dbReference>
<dbReference type="PROSITE" id="PS00973">
    <property type="entry name" value="USP_2"/>
    <property type="match status" value="1"/>
</dbReference>
<dbReference type="PROSITE" id="PS50235">
    <property type="entry name" value="USP_3"/>
    <property type="match status" value="1"/>
</dbReference>
<evidence type="ECO:0000250" key="1">
    <source>
        <dbReference type="UniProtKB" id="Q96K76"/>
    </source>
</evidence>
<evidence type="ECO:0000255" key="2">
    <source>
        <dbReference type="PROSITE-ProRule" id="PRU01035"/>
    </source>
</evidence>
<evidence type="ECO:0000255" key="3">
    <source>
        <dbReference type="PROSITE-ProRule" id="PRU10092"/>
    </source>
</evidence>
<evidence type="ECO:0000255" key="4">
    <source>
        <dbReference type="PROSITE-ProRule" id="PRU10093"/>
    </source>
</evidence>
<evidence type="ECO:0000256" key="5">
    <source>
        <dbReference type="SAM" id="MobiDB-lite"/>
    </source>
</evidence>
<evidence type="ECO:0000269" key="6">
    <source>
    </source>
</evidence>
<evidence type="ECO:0000269" key="7">
    <source>
    </source>
</evidence>
<evidence type="ECO:0000269" key="8">
    <source>
    </source>
</evidence>
<evidence type="ECO:0000269" key="9">
    <source>
    </source>
</evidence>
<evidence type="ECO:0000269" key="10">
    <source>
    </source>
</evidence>
<evidence type="ECO:0000269" key="11">
    <source>
    </source>
</evidence>
<evidence type="ECO:0000303" key="12">
    <source>
    </source>
</evidence>
<evidence type="ECO:0000303" key="13">
    <source>
    </source>
</evidence>
<evidence type="ECO:0000305" key="14"/>
<evidence type="ECO:0000305" key="15">
    <source>
    </source>
</evidence>
<evidence type="ECO:0000305" key="16">
    <source>
    </source>
</evidence>
<evidence type="ECO:0000312" key="17">
    <source>
        <dbReference type="FlyBase" id="FBgn0016756"/>
    </source>
</evidence>
<name>UBPE_DROME</name>
<organism>
    <name type="scientific">Drosophila melanogaster</name>
    <name type="common">Fruit fly</name>
    <dbReference type="NCBI Taxonomy" id="7227"/>
    <lineage>
        <taxon>Eukaryota</taxon>
        <taxon>Metazoa</taxon>
        <taxon>Ecdysozoa</taxon>
        <taxon>Arthropoda</taxon>
        <taxon>Hexapoda</taxon>
        <taxon>Insecta</taxon>
        <taxon>Pterygota</taxon>
        <taxon>Neoptera</taxon>
        <taxon>Endopterygota</taxon>
        <taxon>Diptera</taxon>
        <taxon>Brachycera</taxon>
        <taxon>Muscomorpha</taxon>
        <taxon>Ephydroidea</taxon>
        <taxon>Drosophilidae</taxon>
        <taxon>Drosophila</taxon>
        <taxon>Sophophora</taxon>
    </lineage>
</organism>
<proteinExistence type="evidence at protein level"/>
<comment type="function">
    <text evidence="6 7 9 10 11">Ubiquitin-specific protease that deubiquitinates target proteins to regulate different cellular and developmental pathways (PubMed:10949024, PubMed:18160715, PubMed:26169834, PubMed:27552662). Functions downstream of Dsor1/MEK to positively regulate the Ras/MAPK signaling pathway (PubMed:27552662). Likely to modulate the pathway during various cellular and developmental processes including rl/MAPK activation by the receptors InR, Egfr and sevenless/sev (PubMed:27552662). Functions in the post-translational stabilization of rl/MAPK levels in a mechanism that is independent of rl activity and opposes the activity of the E2 enzyme Unc6 and the putative E3 ligases poe, Ufd4 and Kcmf1, which mediate the ubiquitination and proteasomal degradation of rl (PubMed:27552662). During eye development it may also act downstream of rl/MAPK to negatively regulate the Ras/MAPK signaling pathway by stabilizing the transcriptional repressor ttk and consequently inhibiting photoreceptor cell development (PubMed:18160715). This suggests that at least during eye development, it may act in both the positive and negative regulation of the Ras/MAPK signaling pathway to mediate the development of different cell types (PubMed:18160715, PubMed:27552662). Positively regulates border follicle cell migration during oogenesis by mediating the deubiquitination and stabilization of slbo (PubMed:10949024). In the wing disks it positively regulates wg signaling by stabilizing arm (PubMed:26169834). Has an effect on position-effect variegation (PubMed:8816485).</text>
</comment>
<comment type="catalytic activity">
    <reaction evidence="6 7 9">
        <text>Thiol-dependent hydrolysis of ester, thioester, amide, peptide and isopeptide bonds formed by the C-terminal Gly of ubiquitin (a 76-residue protein attached to proteins as an intracellular targeting signal).</text>
        <dbReference type="EC" id="3.4.19.12"/>
    </reaction>
</comment>
<comment type="subunit">
    <text evidence="7">Interacts with ttk.</text>
</comment>
<comment type="subcellular location">
    <subcellularLocation>
        <location evidence="14">Nucleus</location>
    </subcellularLocation>
</comment>
<comment type="alternative products">
    <event type="alternative splicing"/>
    <isoform>
        <id>Q24574-1</id>
        <name evidence="17">A</name>
        <name evidence="17">B</name>
        <sequence type="displayed"/>
    </isoform>
    <isoform>
        <id>Q24574-2</id>
        <name evidence="17">D</name>
        <sequence type="described" ref="VSP_054033"/>
    </isoform>
</comment>
<comment type="developmental stage">
    <text evidence="7">Ubiquitously expressed in the embryo (at protein level). Ubiquitously expressed in the developing eye (at protein level).</text>
</comment>
<comment type="disruption phenotype">
    <text evidence="9 10">RNAi-mediated knockdown in the adult wing results in the development of wing margin bristles (PubMed:26169834). RNAi-mediated knockdown in the posterior compartment of the wing reduces accumulation of arm, resulting in reduced expression of sens and wg (PubMed:26169834). RNAi-mediated knockdown in larval wing or eye imaginal disks results in decreased rl protein levels (PubMed:27552662).</text>
</comment>
<comment type="similarity">
    <text evidence="14">Belongs to the peptidase C19 family.</text>
</comment>
<comment type="sequence caution" evidence="14">
    <conflict type="erroneous initiation">
        <sequence resource="EMBL-CDS" id="AAL13901"/>
    </conflict>
    <text>Truncated N-terminus.</text>
</comment>
<comment type="sequence caution" evidence="14">
    <conflict type="erroneous initiation">
        <sequence resource="EMBL-CDS" id="CAA67601"/>
    </conflict>
    <text>Truncated N-terminus.</text>
</comment>
<comment type="sequence caution" evidence="14">
    <conflict type="frameshift">
        <sequence resource="EMBL-CDS" id="CAA67601"/>
    </conflict>
</comment>
<sequence length="1556" mass="173794">MTDKESEQCTVSVFDQTPGSEQKKINVVVRSHFTVKRVIDLIGTQFSYEKFELLLQPHDNKDLVNLNALESQLMYEVAGFEPQLKNHLILLPSGSWDGDVTKRFELPIKRVVVKKVMKSDGEKAKSPATGEKKKRVVGEKTKKKPASGSSSPSKAKTTSEDSLAKTSISSESSPEKTSKIKTTAAKISKPGSEKAPRASPEECPELSTEINSKNTSSESPVAKKTAKVTSKPTLELLSPIKPSSPIKELDCEPVDTLSKQQLSEQLQLYPQGRNLISPVDDAPSDLFISDAEQLSDDDLALGASASPTMLGPGYDYGAPTGDSDVEGVTGVTDPSTIGTDDGTYPALSNFYRRKYGGDELRAWQRVNTTGADFVSSATTETEAEARQASLGPRGYVGLVNQAMTCYLNSLLQALFMTPEFRNALYRWEFDNDNEAKNIPYQLQKLFLNLQTSPKAAVETTDLTRSFGWDSTEAWQQHDIQELCRVMFDALEHKFKNTKQANLISNLYEGKMNDYVKCLECNTEKTREDTFLDIPLPVRPFGSSSAYGSIEEALRAFVQPETLDGNNQYLCEKCKKKCDAHKGLHFKSFPYILTLHLKRFDFDYQTMHRIKLNDRVTFPQTLNLNTFINRSGNSGEQNSQLNGTVDDCSTADSGSAMEDDNLSSGVVTTASSSQHENDLNDEDEGIDMSSSTSKSAKQGSGPYLYELFAIMIHSGSASGGHYYAYIKDFDNNEWFCFNDQNVTSITQEDIQRSFGGPNGSYYSSAYTSSTNAYMLMYRQVDAKRNELVAKVADFPEHIKTLLPKLHSEEETRVSRLGRHITVTDLALPDLYKPRVYFYNPSLKKMKITRVYVSQSFNINLVLMSAYEMLNVEQFAPLSRCRLVAYNSSMDTIIQSLESCTDPALTELRAAQNYSLDFLLEYRAEDQEFEVYPPNGITWYVFKVDLSTMAMDGPFLVYSAAREREASDVLRRSIALRLHISEQQFLLATVRATVPKAFVSYDPHPTPEALQHLQNMANTQFKSITYFYLNVPNTDAATLEMLGVPTVESVECASGGDVVDAAMMNGVAPGHMSSSNDYDWRRYKRDLVEPMSQPSPSHGHESNSEDSSLSDGDRTLVETDNMAHRGGGDSQVSSTSHSPQLSSPEDEAASHDAMMRVHAYCNGNGSYAAADVVDPLLLPTSTNHFFYATKVECVDVVGTGSSSGHQSDEEAQLRKPTRAYKLLVGTHMRMGAFKKHIEQLIQVPAAHFKLQRKHDNNLSNNQNNSLVHLIEGETLTVELGKTLEPDEFKAKIHFLRLADIDNETSKLPCVCEWVYNANTTAEQAKKELVAKLHRIDAKYATLSVQNCRIWLKGGRIPIKILSDDETLYCDMRSSIAAEFIVQECEEEVDPQPKDDSLTLFVRRWCPAKLEFGKFQEITLDQDSEIRLSLSQISDIPIDKLSYMKLNSNFPCTSISALSVNESSSWYSVPTTLDKYPLNSTQTGNIYLYKDRTVPARELTLEERRLMNAREKARLDRVGCVSTTRYAQRRERALKIYLDSPEKSSNVTASAPMDVHVNN</sequence>
<gene>
    <name evidence="13 17" type="primary">Usp47</name>
    <name evidence="12" type="synonym">Ubp64E</name>
    <name evidence="17" type="ORF">CG5486</name>
</gene>
<reference key="1">
    <citation type="journal article" date="2000" name="Science">
        <title>The genome sequence of Drosophila melanogaster.</title>
        <authorList>
            <person name="Adams M.D."/>
            <person name="Celniker S.E."/>
            <person name="Holt R.A."/>
            <person name="Evans C.A."/>
            <person name="Gocayne J.D."/>
            <person name="Amanatides P.G."/>
            <person name="Scherer S.E."/>
            <person name="Li P.W."/>
            <person name="Hoskins R.A."/>
            <person name="Galle R.F."/>
            <person name="George R.A."/>
            <person name="Lewis S.E."/>
            <person name="Richards S."/>
            <person name="Ashburner M."/>
            <person name="Henderson S.N."/>
            <person name="Sutton G.G."/>
            <person name="Wortman J.R."/>
            <person name="Yandell M.D."/>
            <person name="Zhang Q."/>
            <person name="Chen L.X."/>
            <person name="Brandon R.C."/>
            <person name="Rogers Y.-H.C."/>
            <person name="Blazej R.G."/>
            <person name="Champe M."/>
            <person name="Pfeiffer B.D."/>
            <person name="Wan K.H."/>
            <person name="Doyle C."/>
            <person name="Baxter E.G."/>
            <person name="Helt G."/>
            <person name="Nelson C.R."/>
            <person name="Miklos G.L.G."/>
            <person name="Abril J.F."/>
            <person name="Agbayani A."/>
            <person name="An H.-J."/>
            <person name="Andrews-Pfannkoch C."/>
            <person name="Baldwin D."/>
            <person name="Ballew R.M."/>
            <person name="Basu A."/>
            <person name="Baxendale J."/>
            <person name="Bayraktaroglu L."/>
            <person name="Beasley E.M."/>
            <person name="Beeson K.Y."/>
            <person name="Benos P.V."/>
            <person name="Berman B.P."/>
            <person name="Bhandari D."/>
            <person name="Bolshakov S."/>
            <person name="Borkova D."/>
            <person name="Botchan M.R."/>
            <person name="Bouck J."/>
            <person name="Brokstein P."/>
            <person name="Brottier P."/>
            <person name="Burtis K.C."/>
            <person name="Busam D.A."/>
            <person name="Butler H."/>
            <person name="Cadieu E."/>
            <person name="Center A."/>
            <person name="Chandra I."/>
            <person name="Cherry J.M."/>
            <person name="Cawley S."/>
            <person name="Dahlke C."/>
            <person name="Davenport L.B."/>
            <person name="Davies P."/>
            <person name="de Pablos B."/>
            <person name="Delcher A."/>
            <person name="Deng Z."/>
            <person name="Mays A.D."/>
            <person name="Dew I."/>
            <person name="Dietz S.M."/>
            <person name="Dodson K."/>
            <person name="Doup L.E."/>
            <person name="Downes M."/>
            <person name="Dugan-Rocha S."/>
            <person name="Dunkov B.C."/>
            <person name="Dunn P."/>
            <person name="Durbin K.J."/>
            <person name="Evangelista C.C."/>
            <person name="Ferraz C."/>
            <person name="Ferriera S."/>
            <person name="Fleischmann W."/>
            <person name="Fosler C."/>
            <person name="Gabrielian A.E."/>
            <person name="Garg N.S."/>
            <person name="Gelbart W.M."/>
            <person name="Glasser K."/>
            <person name="Glodek A."/>
            <person name="Gong F."/>
            <person name="Gorrell J.H."/>
            <person name="Gu Z."/>
            <person name="Guan P."/>
            <person name="Harris M."/>
            <person name="Harris N.L."/>
            <person name="Harvey D.A."/>
            <person name="Heiman T.J."/>
            <person name="Hernandez J.R."/>
            <person name="Houck J."/>
            <person name="Hostin D."/>
            <person name="Houston K.A."/>
            <person name="Howland T.J."/>
            <person name="Wei M.-H."/>
            <person name="Ibegwam C."/>
            <person name="Jalali M."/>
            <person name="Kalush F."/>
            <person name="Karpen G.H."/>
            <person name="Ke Z."/>
            <person name="Kennison J.A."/>
            <person name="Ketchum K.A."/>
            <person name="Kimmel B.E."/>
            <person name="Kodira C.D."/>
            <person name="Kraft C.L."/>
            <person name="Kravitz S."/>
            <person name="Kulp D."/>
            <person name="Lai Z."/>
            <person name="Lasko P."/>
            <person name="Lei Y."/>
            <person name="Levitsky A.A."/>
            <person name="Li J.H."/>
            <person name="Li Z."/>
            <person name="Liang Y."/>
            <person name="Lin X."/>
            <person name="Liu X."/>
            <person name="Mattei B."/>
            <person name="McIntosh T.C."/>
            <person name="McLeod M.P."/>
            <person name="McPherson D."/>
            <person name="Merkulov G."/>
            <person name="Milshina N.V."/>
            <person name="Mobarry C."/>
            <person name="Morris J."/>
            <person name="Moshrefi A."/>
            <person name="Mount S.M."/>
            <person name="Moy M."/>
            <person name="Murphy B."/>
            <person name="Murphy L."/>
            <person name="Muzny D.M."/>
            <person name="Nelson D.L."/>
            <person name="Nelson D.R."/>
            <person name="Nelson K.A."/>
            <person name="Nixon K."/>
            <person name="Nusskern D.R."/>
            <person name="Pacleb J.M."/>
            <person name="Palazzolo M."/>
            <person name="Pittman G.S."/>
            <person name="Pan S."/>
            <person name="Pollard J."/>
            <person name="Puri V."/>
            <person name="Reese M.G."/>
            <person name="Reinert K."/>
            <person name="Remington K."/>
            <person name="Saunders R.D.C."/>
            <person name="Scheeler F."/>
            <person name="Shen H."/>
            <person name="Shue B.C."/>
            <person name="Siden-Kiamos I."/>
            <person name="Simpson M."/>
            <person name="Skupski M.P."/>
            <person name="Smith T.J."/>
            <person name="Spier E."/>
            <person name="Spradling A.C."/>
            <person name="Stapleton M."/>
            <person name="Strong R."/>
            <person name="Sun E."/>
            <person name="Svirskas R."/>
            <person name="Tector C."/>
            <person name="Turner R."/>
            <person name="Venter E."/>
            <person name="Wang A.H."/>
            <person name="Wang X."/>
            <person name="Wang Z.-Y."/>
            <person name="Wassarman D.A."/>
            <person name="Weinstock G.M."/>
            <person name="Weissenbach J."/>
            <person name="Williams S.M."/>
            <person name="Woodage T."/>
            <person name="Worley K.C."/>
            <person name="Wu D."/>
            <person name="Yang S."/>
            <person name="Yao Q.A."/>
            <person name="Ye J."/>
            <person name="Yeh R.-F."/>
            <person name="Zaveri J.S."/>
            <person name="Zhan M."/>
            <person name="Zhang G."/>
            <person name="Zhao Q."/>
            <person name="Zheng L."/>
            <person name="Zheng X.H."/>
            <person name="Zhong F.N."/>
            <person name="Zhong W."/>
            <person name="Zhou X."/>
            <person name="Zhu S.C."/>
            <person name="Zhu X."/>
            <person name="Smith H.O."/>
            <person name="Gibbs R.A."/>
            <person name="Myers E.W."/>
            <person name="Rubin G.M."/>
            <person name="Venter J.C."/>
        </authorList>
    </citation>
    <scope>NUCLEOTIDE SEQUENCE [LARGE SCALE GENOMIC DNA]</scope>
    <source>
        <strain>Berkeley</strain>
    </source>
</reference>
<reference key="2">
    <citation type="journal article" date="2002" name="Genome Biol.">
        <title>Annotation of the Drosophila melanogaster euchromatic genome: a systematic review.</title>
        <authorList>
            <person name="Misra S."/>
            <person name="Crosby M.A."/>
            <person name="Mungall C.J."/>
            <person name="Matthews B.B."/>
            <person name="Campbell K.S."/>
            <person name="Hradecky P."/>
            <person name="Huang Y."/>
            <person name="Kaminker J.S."/>
            <person name="Millburn G.H."/>
            <person name="Prochnik S.E."/>
            <person name="Smith C.D."/>
            <person name="Tupy J.L."/>
            <person name="Whitfield E.J."/>
            <person name="Bayraktaroglu L."/>
            <person name="Berman B.P."/>
            <person name="Bettencourt B.R."/>
            <person name="Celniker S.E."/>
            <person name="de Grey A.D.N.J."/>
            <person name="Drysdale R.A."/>
            <person name="Harris N.L."/>
            <person name="Richter J."/>
            <person name="Russo S."/>
            <person name="Schroeder A.J."/>
            <person name="Shu S.Q."/>
            <person name="Stapleton M."/>
            <person name="Yamada C."/>
            <person name="Ashburner M."/>
            <person name="Gelbart W.M."/>
            <person name="Rubin G.M."/>
            <person name="Lewis S.E."/>
        </authorList>
    </citation>
    <scope>GENOME REANNOTATION</scope>
    <scope>ALTERNATIVE SPLICING</scope>
    <source>
        <strain>Berkeley</strain>
    </source>
</reference>
<reference key="3">
    <citation type="submission" date="2003-02" db="EMBL/GenBank/DDBJ databases">
        <authorList>
            <person name="Stapleton M."/>
            <person name="Brokstein P."/>
            <person name="Hong L."/>
            <person name="Agbayani A."/>
            <person name="Carlson J.W."/>
            <person name="Champe M."/>
            <person name="Chavez C."/>
            <person name="Dorsett V."/>
            <person name="Dresnek D."/>
            <person name="Farfan D."/>
            <person name="Frise E."/>
            <person name="George R.A."/>
            <person name="Gonzalez M."/>
            <person name="Guarin H."/>
            <person name="Kronmiller B."/>
            <person name="Li P.W."/>
            <person name="Liao G."/>
            <person name="Miranda A."/>
            <person name="Mungall C.J."/>
            <person name="Nunoo J."/>
            <person name="Pacleb J.M."/>
            <person name="Paragas V."/>
            <person name="Park S."/>
            <person name="Patel S."/>
            <person name="Phouanenavong S."/>
            <person name="Wan K.H."/>
            <person name="Yu C."/>
            <person name="Lewis S.E."/>
            <person name="Rubin G.M."/>
            <person name="Celniker S.E."/>
        </authorList>
    </citation>
    <scope>NUCLEOTIDE SEQUENCE [LARGE SCALE MRNA] (ISOFORM A)</scope>
    <source>
        <strain>Berkeley</strain>
        <tissue>Embryo</tissue>
    </source>
</reference>
<reference key="4">
    <citation type="journal article" date="1996" name="Mol. Cell. Biol.">
        <title>The dose of a putative ubiquitin-specific protease affects position-effect variegation in Drosophila melanogaster.</title>
        <authorList>
            <person name="Henchoz S."/>
            <person name="de Rubertis F."/>
            <person name="Pauli D."/>
            <person name="Spierer P."/>
        </authorList>
    </citation>
    <scope>NUCLEOTIDE SEQUENCE [MRNA] OF 318-1556 (ISOFORMS A/D)</scope>
    <scope>FUNCTION</scope>
    <source>
        <tissue>Embryo</tissue>
    </source>
</reference>
<reference key="5">
    <citation type="journal article" date="2002" name="Genome Biol.">
        <title>A Drosophila full-length cDNA resource.</title>
        <authorList>
            <person name="Stapleton M."/>
            <person name="Carlson J.W."/>
            <person name="Brokstein P."/>
            <person name="Yu C."/>
            <person name="Champe M."/>
            <person name="George R.A."/>
            <person name="Guarin H."/>
            <person name="Kronmiller B."/>
            <person name="Pacleb J.M."/>
            <person name="Park S."/>
            <person name="Wan K.H."/>
            <person name="Rubin G.M."/>
            <person name="Celniker S.E."/>
        </authorList>
    </citation>
    <scope>NUCLEOTIDE SEQUENCE [LARGE SCALE MRNA] OF 528-1556 (ISOFORMS A/D)</scope>
    <source>
        <strain>Berkeley</strain>
        <tissue>Embryo</tissue>
    </source>
</reference>
<reference key="6">
    <citation type="journal article" date="2000" name="Mol. Cell">
        <title>The level of C/EBP protein is critical for cell migration during Drosophila oogenesis and is tightly controlled by regulated degradation.</title>
        <authorList>
            <person name="Roerth P."/>
            <person name="Szabo K."/>
            <person name="Texido G."/>
        </authorList>
    </citation>
    <scope>FUNCTION</scope>
    <scope>CATALYTIC ACTIVITY</scope>
    <scope>ACTIVE SITE</scope>
    <scope>MUTAGENESIS OF CYS-405</scope>
</reference>
<reference key="7">
    <citation type="journal article" date="2008" name="J. Proteome Res.">
        <title>Phosphoproteome analysis of Drosophila melanogaster embryos.</title>
        <authorList>
            <person name="Zhai B."/>
            <person name="Villen J."/>
            <person name="Beausoleil S.A."/>
            <person name="Mintseris J."/>
            <person name="Gygi S.P."/>
        </authorList>
    </citation>
    <scope>PHOSPHORYLATION [LARGE SCALE ANALYSIS] AT SER-172; SER-173; SER-238; SER-1131; SER-1132; SER-1140; SER-1141; SER-1199; SER-1201 AND SER-1205</scope>
    <scope>IDENTIFICATION BY MASS SPECTROMETRY</scope>
    <source>
        <tissue>Embryo</tissue>
    </source>
</reference>
<reference key="8">
    <citation type="journal article" date="2008" name="Mol. Cell. Biol.">
        <title>Deubiquitylating enzyme UBP64 controls cell fate through stabilization of the transcriptional repressor tramtrack.</title>
        <authorList>
            <person name="Bajpe P.K."/>
            <person name="van der Knaap J.A."/>
            <person name="Demmers J.A."/>
            <person name="Bezstarosti K."/>
            <person name="Bassett A."/>
            <person name="van Beusekom H.M."/>
            <person name="Travers A.A."/>
            <person name="Verrijzer C.P."/>
        </authorList>
    </citation>
    <scope>FUNCTION</scope>
    <scope>CATALYTIC ACTIVITY</scope>
    <scope>INTERACTION WITH TTK</scope>
    <scope>DEVELOPMENTAL STAGE</scope>
</reference>
<reference key="9">
    <citation type="journal article" date="2015" name="Mol. Cell. Biol.">
        <title>Deubiquitinase USP47/UBP64E regulates beta-Catenin ubiquitination and degradation and plays a positive role in wnt signaling.</title>
        <authorList>
            <person name="Shi J."/>
            <person name="Liu Y."/>
            <person name="Xu X."/>
            <person name="Zhang W."/>
            <person name="Yu T."/>
            <person name="Jia J."/>
            <person name="Liu C."/>
        </authorList>
    </citation>
    <scope>FUNCTION</scope>
    <scope>CATALYTIC ACTIVITY</scope>
    <scope>DISRUPTION PHENOTYPE</scope>
    <scope>ACTIVE SITE</scope>
    <scope>MUTAGENESIS OF CYS-405</scope>
</reference>
<reference key="10">
    <citation type="journal article" date="2016" name="PLoS Biol.">
        <title>The Deubiquitinase USP47 Stabilizes MAPK by Counteracting the Function of the N-end Rule ligase POE/UBR4 in Drosophila.</title>
        <authorList>
            <person name="Ashton-Beaucage D."/>
            <person name="Lemieux C."/>
            <person name="Udell C.M."/>
            <person name="Sahmi M."/>
            <person name="Rochette S."/>
            <person name="Therrien M."/>
        </authorList>
    </citation>
    <scope>FUNCTION</scope>
    <scope>DISRUPTION PHENOTYPE</scope>
</reference>
<feature type="chain" id="PRO_0000080687" description="Ubiquitin carboxyl-terminal hydrolase 47">
    <location>
        <begin position="1"/>
        <end position="1556"/>
    </location>
</feature>
<feature type="domain" description="USP" evidence="2">
    <location>
        <begin position="396"/>
        <end position="779"/>
    </location>
</feature>
<feature type="region of interest" description="Disordered" evidence="5">
    <location>
        <begin position="117"/>
        <end position="231"/>
    </location>
</feature>
<feature type="region of interest" description="Disordered" evidence="5">
    <location>
        <begin position="628"/>
        <end position="697"/>
    </location>
</feature>
<feature type="region of interest" description="Disordered" evidence="5">
    <location>
        <begin position="1087"/>
        <end position="1148"/>
    </location>
</feature>
<feature type="compositionally biased region" description="Low complexity" evidence="5">
    <location>
        <begin position="146"/>
        <end position="156"/>
    </location>
</feature>
<feature type="compositionally biased region" description="Low complexity" evidence="5">
    <location>
        <begin position="180"/>
        <end position="189"/>
    </location>
</feature>
<feature type="compositionally biased region" description="Basic and acidic residues" evidence="5">
    <location>
        <begin position="191"/>
        <end position="200"/>
    </location>
</feature>
<feature type="compositionally biased region" description="Polar residues" evidence="5">
    <location>
        <begin position="208"/>
        <end position="219"/>
    </location>
</feature>
<feature type="compositionally biased region" description="Polar residues" evidence="5">
    <location>
        <begin position="628"/>
        <end position="642"/>
    </location>
</feature>
<feature type="compositionally biased region" description="Polar residues" evidence="5">
    <location>
        <begin position="661"/>
        <end position="673"/>
    </location>
</feature>
<feature type="compositionally biased region" description="Low complexity" evidence="5">
    <location>
        <begin position="688"/>
        <end position="697"/>
    </location>
</feature>
<feature type="compositionally biased region" description="Basic and acidic residues" evidence="5">
    <location>
        <begin position="1109"/>
        <end position="1125"/>
    </location>
</feature>
<feature type="compositionally biased region" description="Low complexity" evidence="5">
    <location>
        <begin position="1128"/>
        <end position="1141"/>
    </location>
</feature>
<feature type="active site" description="Nucleophile" evidence="3 4 15 16">
    <location>
        <position position="405"/>
    </location>
</feature>
<feature type="active site" description="Proton acceptor" evidence="3 4">
    <location>
        <position position="720"/>
    </location>
</feature>
<feature type="modified residue" description="Phosphoserine" evidence="8">
    <location>
        <position position="172"/>
    </location>
</feature>
<feature type="modified residue" description="Phosphoserine" evidence="8">
    <location>
        <position position="173"/>
    </location>
</feature>
<feature type="modified residue" description="Phosphoserine" evidence="8">
    <location>
        <position position="238"/>
    </location>
</feature>
<feature type="modified residue" description="Phosphoserine" evidence="8">
    <location>
        <position position="1131"/>
    </location>
</feature>
<feature type="modified residue" description="Phosphoserine" evidence="8">
    <location>
        <position position="1132"/>
    </location>
</feature>
<feature type="modified residue" description="Phosphoserine" evidence="8">
    <location>
        <position position="1140"/>
    </location>
</feature>
<feature type="modified residue" description="Phosphoserine" evidence="8">
    <location>
        <position position="1141"/>
    </location>
</feature>
<feature type="modified residue" description="Phosphoserine" evidence="8">
    <location>
        <position position="1199"/>
    </location>
</feature>
<feature type="modified residue" description="Phosphoserine" evidence="8">
    <location>
        <position position="1201"/>
    </location>
</feature>
<feature type="modified residue" description="Phosphoserine" evidence="8">
    <location>
        <position position="1205"/>
    </location>
</feature>
<feature type="splice variant" id="VSP_054033" description="In isoform D." evidence="14">
    <location>
        <begin position="272"/>
        <end position="289"/>
    </location>
</feature>
<feature type="mutagenesis site" description="Loss of activity." evidence="6">
    <original>C</original>
    <variation>A</variation>
    <location>
        <position position="405"/>
    </location>
</feature>
<feature type="mutagenesis site" description="Loss of activity." evidence="9">
    <original>C</original>
    <variation>S</variation>
    <location>
        <position position="405"/>
    </location>
</feature>
<feature type="sequence conflict" description="In Ref. 4; CAA67601." evidence="14" ref="4">
    <original>NIP</original>
    <variation>KS</variation>
    <location>
        <begin position="437"/>
        <end position="439"/>
    </location>
</feature>
<feature type="sequence conflict" description="In Ref. 4; CAA67601." evidence="14" ref="4">
    <original>D</original>
    <variation>A</variation>
    <location>
        <position position="513"/>
    </location>
</feature>
<feature type="sequence conflict" description="In Ref. 4; CAA67601." evidence="14" ref="4">
    <original>E</original>
    <variation>G</variation>
    <location>
        <position position="519"/>
    </location>
</feature>
<feature type="sequence conflict" description="In Ref. 4; CAA67601." evidence="14" ref="4">
    <original>TR</original>
    <variation>NDC</variation>
    <location>
        <begin position="525"/>
        <end position="526"/>
    </location>
</feature>
<feature type="sequence conflict" description="In Ref. 5; AAL13901." evidence="14" ref="5">
    <original>D</original>
    <variation>DS</variation>
    <location>
        <position position="645"/>
    </location>
</feature>
<feature type="sequence conflict" description="In Ref. 4; CAA67601." evidence="14" ref="4">
    <original>A</original>
    <variation>R</variation>
    <location>
        <position position="791"/>
    </location>
</feature>
<feature type="sequence conflict" description="In Ref. 4; CAA67601." evidence="14" ref="4">
    <location>
        <position position="910"/>
    </location>
</feature>
<protein>
    <recommendedName>
        <fullName evidence="1">Ubiquitin carboxyl-terminal hydrolase 47</fullName>
        <ecNumber evidence="6 7 9">3.4.19.12</ecNumber>
    </recommendedName>
    <alternativeName>
        <fullName evidence="1">Ubiquitin thioesterase 47</fullName>
    </alternativeName>
    <alternativeName>
        <fullName evidence="13">Ubiquitin-specific-processing protease 47</fullName>
    </alternativeName>
</protein>